<reference key="1">
    <citation type="journal article" date="1998" name="Science">
        <title>Genome sequence of the nematode C. elegans: a platform for investigating biology.</title>
        <authorList>
            <consortium name="The C. elegans sequencing consortium"/>
        </authorList>
    </citation>
    <scope>NUCLEOTIDE SEQUENCE [LARGE SCALE GENOMIC DNA]</scope>
    <source>
        <strain>Bristol N2</strain>
    </source>
</reference>
<reference key="2">
    <citation type="journal article" date="1999" name="Proc. Natl. Acad. Sci. U.S.A.">
        <title>Caenorhabditis elegans mediator complexes are required for developmental-specific transcriptional activation.</title>
        <authorList>
            <person name="Kwon J.Y."/>
            <person name="Park J.M."/>
            <person name="Gim B.S."/>
            <person name="Han S.J."/>
            <person name="Lee J."/>
            <person name="Kim Y.-J."/>
        </authorList>
    </citation>
    <scope>FUNCTION</scope>
    <scope>SUBCELLULAR LOCATION</scope>
</reference>
<name>MED10_CAEEL</name>
<evidence type="ECO:0000250" key="1"/>
<evidence type="ECO:0000256" key="2">
    <source>
        <dbReference type="SAM" id="MobiDB-lite"/>
    </source>
</evidence>
<evidence type="ECO:0000269" key="3">
    <source>
    </source>
</evidence>
<evidence type="ECO:0000305" key="4"/>
<sequence>MVQQQQQSQQRMMELHERNDREKLARKTEKEREEERRKQEDDKILQLEKKLEEFQENARFIGDLASNFQTKYQDALNGRIYTLVRGLQDLDRMKGTFSDKKVPLDLLPYLDDGKNPCLYSKHCMEKTLEKNKAVNGKIEIYKKFRAHLMKEFSEEMPDLVMYYRSIREDLDLS</sequence>
<keyword id="KW-0010">Activator</keyword>
<keyword id="KW-0539">Nucleus</keyword>
<keyword id="KW-1185">Reference proteome</keyword>
<keyword id="KW-0804">Transcription</keyword>
<keyword id="KW-0805">Transcription regulation</keyword>
<accession>P45966</accession>
<protein>
    <recommendedName>
        <fullName>Mediator of RNA polymerase II transcription subunit 10</fullName>
    </recommendedName>
    <alternativeName>
        <fullName>CeMED10</fullName>
    </alternativeName>
    <alternativeName>
        <fullName>CeNUT2</fullName>
    </alternativeName>
    <alternativeName>
        <fullName>Mediator complex subunit 10</fullName>
    </alternativeName>
</protein>
<dbReference type="EMBL" id="Z36753">
    <property type="protein sequence ID" value="CAA85334.1"/>
    <property type="molecule type" value="Genomic_DNA"/>
</dbReference>
<dbReference type="PIR" id="T24720">
    <property type="entry name" value="T24720"/>
</dbReference>
<dbReference type="RefSeq" id="NP_495650.2">
    <property type="nucleotide sequence ID" value="NM_063249.5"/>
</dbReference>
<dbReference type="SMR" id="P45966"/>
<dbReference type="BioGRID" id="52979">
    <property type="interactions" value="3"/>
</dbReference>
<dbReference type="FunCoup" id="P45966">
    <property type="interactions" value="2092"/>
</dbReference>
<dbReference type="IntAct" id="P45966">
    <property type="interactions" value="4"/>
</dbReference>
<dbReference type="STRING" id="6239.T09A5.6.1"/>
<dbReference type="PaxDb" id="6239-T09A5.6.1"/>
<dbReference type="PeptideAtlas" id="P45966"/>
<dbReference type="EnsemblMetazoa" id="T09A5.6.1">
    <property type="protein sequence ID" value="T09A5.6.1"/>
    <property type="gene ID" value="WBGene00007014"/>
</dbReference>
<dbReference type="GeneID" id="188311"/>
<dbReference type="KEGG" id="cel:CELE_T09A5.6"/>
<dbReference type="UCSC" id="T09A5.6">
    <property type="organism name" value="c. elegans"/>
</dbReference>
<dbReference type="AGR" id="WB:WBGene00007014"/>
<dbReference type="CTD" id="188311"/>
<dbReference type="WormBase" id="T09A5.6">
    <property type="protein sequence ID" value="CE51730"/>
    <property type="gene ID" value="WBGene00007014"/>
    <property type="gene designation" value="mdt-10"/>
</dbReference>
<dbReference type="eggNOG" id="KOG3046">
    <property type="taxonomic scope" value="Eukaryota"/>
</dbReference>
<dbReference type="GeneTree" id="ENSGT00960000187808"/>
<dbReference type="HOGENOM" id="CLU_096169_3_0_1"/>
<dbReference type="InParanoid" id="P45966"/>
<dbReference type="OMA" id="QYQRAKM"/>
<dbReference type="OrthoDB" id="337270at2759"/>
<dbReference type="PhylomeDB" id="P45966"/>
<dbReference type="PRO" id="PR:P45966"/>
<dbReference type="Proteomes" id="UP000001940">
    <property type="component" value="Chromosome II"/>
</dbReference>
<dbReference type="Bgee" id="WBGene00007014">
    <property type="expression patterns" value="Expressed in germ line (C elegans) and 4 other cell types or tissues"/>
</dbReference>
<dbReference type="GO" id="GO:0016592">
    <property type="term" value="C:mediator complex"/>
    <property type="evidence" value="ECO:0007669"/>
    <property type="project" value="InterPro"/>
</dbReference>
<dbReference type="GO" id="GO:0003712">
    <property type="term" value="F:transcription coregulator activity"/>
    <property type="evidence" value="ECO:0007669"/>
    <property type="project" value="InterPro"/>
</dbReference>
<dbReference type="GO" id="GO:0006357">
    <property type="term" value="P:regulation of transcription by RNA polymerase II"/>
    <property type="evidence" value="ECO:0007669"/>
    <property type="project" value="InterPro"/>
</dbReference>
<dbReference type="InterPro" id="IPR019145">
    <property type="entry name" value="Mediator_Med10"/>
</dbReference>
<dbReference type="PANTHER" id="PTHR13345">
    <property type="entry name" value="MEDIATOR OF RNA POLYMERASE II TRANSCRIPTION SUBUNIT 10"/>
    <property type="match status" value="1"/>
</dbReference>
<dbReference type="PANTHER" id="PTHR13345:SF13">
    <property type="entry name" value="MEDIATOR OF RNA POLYMERASE II TRANSCRIPTION SUBUNIT 10"/>
    <property type="match status" value="1"/>
</dbReference>
<dbReference type="Pfam" id="PF09748">
    <property type="entry name" value="Med10"/>
    <property type="match status" value="1"/>
</dbReference>
<gene>
    <name type="primary">mdt-10</name>
    <name type="ORF">T09A5.6</name>
</gene>
<feature type="chain" id="PRO_0000065455" description="Mediator of RNA polymerase II transcription subunit 10">
    <location>
        <begin position="1"/>
        <end position="173"/>
    </location>
</feature>
<feature type="region of interest" description="Disordered" evidence="2">
    <location>
        <begin position="1"/>
        <end position="42"/>
    </location>
</feature>
<feature type="compositionally biased region" description="Low complexity" evidence="2">
    <location>
        <begin position="1"/>
        <end position="10"/>
    </location>
</feature>
<feature type="compositionally biased region" description="Basic and acidic residues" evidence="2">
    <location>
        <begin position="13"/>
        <end position="42"/>
    </location>
</feature>
<comment type="function">
    <text evidence="1 3">Component of the Mediator complex, a coactivator involved in the regulated transcription of nearly all RNA polymerase II-dependent genes. Mediator functions as a bridge to convey information from gene-specific regulatory proteins to the basal RNA polymerase II transcription machinery. Mediator is recruited to promoters by direct interactions with regulatory proteins and serves as a scaffold for the assembly of a functional preinitiation complex with RNA polymerase II and the general transcription factors (By similarity). Required for germ cell development and for transcriptional activation of certain stage-specific inducible promoters.</text>
</comment>
<comment type="subunit">
    <text evidence="1">Component of the Mediator complex.</text>
</comment>
<comment type="subcellular location">
    <subcellularLocation>
        <location evidence="3">Nucleus</location>
    </subcellularLocation>
</comment>
<comment type="similarity">
    <text evidence="4">Belongs to the Mediator complex subunit 10 family.</text>
</comment>
<organism>
    <name type="scientific">Caenorhabditis elegans</name>
    <dbReference type="NCBI Taxonomy" id="6239"/>
    <lineage>
        <taxon>Eukaryota</taxon>
        <taxon>Metazoa</taxon>
        <taxon>Ecdysozoa</taxon>
        <taxon>Nematoda</taxon>
        <taxon>Chromadorea</taxon>
        <taxon>Rhabditida</taxon>
        <taxon>Rhabditina</taxon>
        <taxon>Rhabditomorpha</taxon>
        <taxon>Rhabditoidea</taxon>
        <taxon>Rhabditidae</taxon>
        <taxon>Peloderinae</taxon>
        <taxon>Caenorhabditis</taxon>
    </lineage>
</organism>
<proteinExistence type="inferred from homology"/>